<keyword id="KW-0963">Cytoplasm</keyword>
<keyword id="KW-0275">Fatty acid biosynthesis</keyword>
<keyword id="KW-0276">Fatty acid metabolism</keyword>
<keyword id="KW-0444">Lipid biosynthesis</keyword>
<keyword id="KW-0443">Lipid metabolism</keyword>
<keyword id="KW-0596">Phosphopantetheine</keyword>
<keyword id="KW-0597">Phosphoprotein</keyword>
<keyword id="KW-1185">Reference proteome</keyword>
<name>ACP_PICP2</name>
<organism>
    <name type="scientific">Picosynechococcus sp. (strain ATCC 27264 / PCC 7002 / PR-6)</name>
    <name type="common">Agmenellum quadruplicatum</name>
    <dbReference type="NCBI Taxonomy" id="32049"/>
    <lineage>
        <taxon>Bacteria</taxon>
        <taxon>Bacillati</taxon>
        <taxon>Cyanobacteriota</taxon>
        <taxon>Cyanophyceae</taxon>
        <taxon>Oscillatoriophycideae</taxon>
        <taxon>Chroococcales</taxon>
        <taxon>Geminocystaceae</taxon>
        <taxon>Picosynechococcus</taxon>
    </lineage>
</organism>
<dbReference type="EMBL" id="CP000951">
    <property type="protein sequence ID" value="ACA99027.1"/>
    <property type="molecule type" value="Genomic_DNA"/>
</dbReference>
<dbReference type="RefSeq" id="WP_012306651.1">
    <property type="nucleotide sequence ID" value="NZ_JAHHPU010000001.1"/>
</dbReference>
<dbReference type="SMR" id="B1XJG7"/>
<dbReference type="STRING" id="32049.SYNPCC7002_A1024"/>
<dbReference type="KEGG" id="syp:SYNPCC7002_A1024"/>
<dbReference type="eggNOG" id="COG0236">
    <property type="taxonomic scope" value="Bacteria"/>
</dbReference>
<dbReference type="HOGENOM" id="CLU_108696_5_1_3"/>
<dbReference type="UniPathway" id="UPA00094"/>
<dbReference type="Proteomes" id="UP000001688">
    <property type="component" value="Chromosome"/>
</dbReference>
<dbReference type="GO" id="GO:0005829">
    <property type="term" value="C:cytosol"/>
    <property type="evidence" value="ECO:0007669"/>
    <property type="project" value="TreeGrafter"/>
</dbReference>
<dbReference type="GO" id="GO:0016020">
    <property type="term" value="C:membrane"/>
    <property type="evidence" value="ECO:0007669"/>
    <property type="project" value="GOC"/>
</dbReference>
<dbReference type="GO" id="GO:0000035">
    <property type="term" value="F:acyl binding"/>
    <property type="evidence" value="ECO:0007669"/>
    <property type="project" value="TreeGrafter"/>
</dbReference>
<dbReference type="GO" id="GO:0000036">
    <property type="term" value="F:acyl carrier activity"/>
    <property type="evidence" value="ECO:0007669"/>
    <property type="project" value="UniProtKB-UniRule"/>
</dbReference>
<dbReference type="GO" id="GO:0009245">
    <property type="term" value="P:lipid A biosynthetic process"/>
    <property type="evidence" value="ECO:0007669"/>
    <property type="project" value="TreeGrafter"/>
</dbReference>
<dbReference type="FunFam" id="1.10.1200.10:FF:000003">
    <property type="entry name" value="Acyl carrier protein"/>
    <property type="match status" value="1"/>
</dbReference>
<dbReference type="Gene3D" id="1.10.1200.10">
    <property type="entry name" value="ACP-like"/>
    <property type="match status" value="1"/>
</dbReference>
<dbReference type="HAMAP" id="MF_01217">
    <property type="entry name" value="Acyl_carrier"/>
    <property type="match status" value="1"/>
</dbReference>
<dbReference type="InterPro" id="IPR003231">
    <property type="entry name" value="ACP"/>
</dbReference>
<dbReference type="InterPro" id="IPR036736">
    <property type="entry name" value="ACP-like_sf"/>
</dbReference>
<dbReference type="InterPro" id="IPR009081">
    <property type="entry name" value="PP-bd_ACP"/>
</dbReference>
<dbReference type="NCBIfam" id="TIGR00517">
    <property type="entry name" value="acyl_carrier"/>
    <property type="match status" value="1"/>
</dbReference>
<dbReference type="NCBIfam" id="NF002148">
    <property type="entry name" value="PRK00982.1-2"/>
    <property type="match status" value="1"/>
</dbReference>
<dbReference type="NCBIfam" id="NF002150">
    <property type="entry name" value="PRK00982.1-4"/>
    <property type="match status" value="1"/>
</dbReference>
<dbReference type="NCBIfam" id="NF002151">
    <property type="entry name" value="PRK00982.1-5"/>
    <property type="match status" value="1"/>
</dbReference>
<dbReference type="PANTHER" id="PTHR20863">
    <property type="entry name" value="ACYL CARRIER PROTEIN"/>
    <property type="match status" value="1"/>
</dbReference>
<dbReference type="PANTHER" id="PTHR20863:SF76">
    <property type="entry name" value="CARRIER DOMAIN-CONTAINING PROTEIN"/>
    <property type="match status" value="1"/>
</dbReference>
<dbReference type="Pfam" id="PF00550">
    <property type="entry name" value="PP-binding"/>
    <property type="match status" value="1"/>
</dbReference>
<dbReference type="SUPFAM" id="SSF47336">
    <property type="entry name" value="ACP-like"/>
    <property type="match status" value="1"/>
</dbReference>
<dbReference type="PROSITE" id="PS50075">
    <property type="entry name" value="CARRIER"/>
    <property type="match status" value="1"/>
</dbReference>
<protein>
    <recommendedName>
        <fullName evidence="1">Acyl carrier protein</fullName>
        <shortName evidence="1">ACP</shortName>
    </recommendedName>
</protein>
<proteinExistence type="inferred from homology"/>
<feature type="chain" id="PRO_1000213919" description="Acyl carrier protein">
    <location>
        <begin position="1"/>
        <end position="81"/>
    </location>
</feature>
<feature type="domain" description="Carrier" evidence="2">
    <location>
        <begin position="3"/>
        <end position="78"/>
    </location>
</feature>
<feature type="modified residue" description="O-(pantetheine 4'-phosphoryl)serine" evidence="2">
    <location>
        <position position="38"/>
    </location>
</feature>
<comment type="function">
    <text evidence="1">Carrier of the growing fatty acid chain in fatty acid biosynthesis.</text>
</comment>
<comment type="pathway">
    <text evidence="1">Lipid metabolism; fatty acid biosynthesis.</text>
</comment>
<comment type="subcellular location">
    <subcellularLocation>
        <location evidence="1">Cytoplasm</location>
    </subcellularLocation>
</comment>
<comment type="PTM">
    <text evidence="1">4'-phosphopantetheine is transferred from CoA to a specific serine of apo-ACP by AcpS. This modification is essential for activity because fatty acids are bound in thioester linkage to the sulfhydryl of the prosthetic group.</text>
</comment>
<comment type="similarity">
    <text evidence="1">Belongs to the acyl carrier protein (ACP) family.</text>
</comment>
<accession>B1XJG7</accession>
<gene>
    <name evidence="1" type="primary">acpP</name>
    <name type="ordered locus">SYNPCC7002_A1024</name>
</gene>
<sequence length="81" mass="8890">MNQEIFDKIKNIIVDQLDVDADSVSPESNFISDLDADSLDTVELVMAFEEEFDIDIPDDVAEKITTVGEAVNIIAEKTGAN</sequence>
<evidence type="ECO:0000255" key="1">
    <source>
        <dbReference type="HAMAP-Rule" id="MF_01217"/>
    </source>
</evidence>
<evidence type="ECO:0000255" key="2">
    <source>
        <dbReference type="PROSITE-ProRule" id="PRU00258"/>
    </source>
</evidence>
<reference key="1">
    <citation type="submission" date="2008-02" db="EMBL/GenBank/DDBJ databases">
        <title>Complete sequence of Synechococcus sp. PCC 7002.</title>
        <authorList>
            <person name="Li T."/>
            <person name="Zhao J."/>
            <person name="Zhao C."/>
            <person name="Liu Z."/>
            <person name="Zhao F."/>
            <person name="Marquardt J."/>
            <person name="Nomura C.T."/>
            <person name="Persson S."/>
            <person name="Detter J.C."/>
            <person name="Richardson P.M."/>
            <person name="Lanz C."/>
            <person name="Schuster S.C."/>
            <person name="Wang J."/>
            <person name="Li S."/>
            <person name="Huang X."/>
            <person name="Cai T."/>
            <person name="Yu Z."/>
            <person name="Luo J."/>
            <person name="Zhao J."/>
            <person name="Bryant D.A."/>
        </authorList>
    </citation>
    <scope>NUCLEOTIDE SEQUENCE [LARGE SCALE GENOMIC DNA]</scope>
    <source>
        <strain>ATCC 27264 / PCC 7002 / PR-6</strain>
    </source>
</reference>